<gene>
    <name evidence="1" type="primary">hemE</name>
    <name type="ordered locus">SSP0965</name>
</gene>
<reference key="1">
    <citation type="journal article" date="2005" name="Proc. Natl. Acad. Sci. U.S.A.">
        <title>Whole genome sequence of Staphylococcus saprophyticus reveals the pathogenesis of uncomplicated urinary tract infection.</title>
        <authorList>
            <person name="Kuroda M."/>
            <person name="Yamashita A."/>
            <person name="Hirakawa H."/>
            <person name="Kumano M."/>
            <person name="Morikawa K."/>
            <person name="Higashide M."/>
            <person name="Maruyama A."/>
            <person name="Inose Y."/>
            <person name="Matoba K."/>
            <person name="Toh H."/>
            <person name="Kuhara S."/>
            <person name="Hattori M."/>
            <person name="Ohta T."/>
        </authorList>
    </citation>
    <scope>NUCLEOTIDE SEQUENCE [LARGE SCALE GENOMIC DNA]</scope>
    <source>
        <strain>ATCC 15305 / DSM 20229 / NCIMB 8711 / NCTC 7292 / S-41</strain>
    </source>
</reference>
<keyword id="KW-0963">Cytoplasm</keyword>
<keyword id="KW-0210">Decarboxylase</keyword>
<keyword id="KW-0456">Lyase</keyword>
<keyword id="KW-0627">Porphyrin biosynthesis</keyword>
<keyword id="KW-1185">Reference proteome</keyword>
<dbReference type="EC" id="4.1.1.37" evidence="1"/>
<dbReference type="EMBL" id="AP008934">
    <property type="protein sequence ID" value="BAE18110.1"/>
    <property type="molecule type" value="Genomic_DNA"/>
</dbReference>
<dbReference type="RefSeq" id="WP_011302820.1">
    <property type="nucleotide sequence ID" value="NZ_MTGA01000033.1"/>
</dbReference>
<dbReference type="SMR" id="Q49YM7"/>
<dbReference type="GeneID" id="3616147"/>
<dbReference type="KEGG" id="ssp:SSP0965"/>
<dbReference type="PATRIC" id="fig|342451.11.peg.966"/>
<dbReference type="eggNOG" id="COG0407">
    <property type="taxonomic scope" value="Bacteria"/>
</dbReference>
<dbReference type="HOGENOM" id="CLU_040933_0_1_9"/>
<dbReference type="OrthoDB" id="9806656at2"/>
<dbReference type="UniPathway" id="UPA00251">
    <property type="reaction ID" value="UER00321"/>
</dbReference>
<dbReference type="Proteomes" id="UP000006371">
    <property type="component" value="Chromosome"/>
</dbReference>
<dbReference type="GO" id="GO:0005829">
    <property type="term" value="C:cytosol"/>
    <property type="evidence" value="ECO:0007669"/>
    <property type="project" value="TreeGrafter"/>
</dbReference>
<dbReference type="GO" id="GO:0004853">
    <property type="term" value="F:uroporphyrinogen decarboxylase activity"/>
    <property type="evidence" value="ECO:0007669"/>
    <property type="project" value="UniProtKB-UniRule"/>
</dbReference>
<dbReference type="GO" id="GO:0006782">
    <property type="term" value="P:protoporphyrinogen IX biosynthetic process"/>
    <property type="evidence" value="ECO:0007669"/>
    <property type="project" value="UniProtKB-UniRule"/>
</dbReference>
<dbReference type="CDD" id="cd00717">
    <property type="entry name" value="URO-D"/>
    <property type="match status" value="1"/>
</dbReference>
<dbReference type="FunFam" id="3.20.20.210:FF:000005">
    <property type="entry name" value="Uroporphyrinogen decarboxylase"/>
    <property type="match status" value="1"/>
</dbReference>
<dbReference type="Gene3D" id="3.20.20.210">
    <property type="match status" value="1"/>
</dbReference>
<dbReference type="HAMAP" id="MF_00218">
    <property type="entry name" value="URO_D"/>
    <property type="match status" value="1"/>
</dbReference>
<dbReference type="InterPro" id="IPR038071">
    <property type="entry name" value="UROD/MetE-like_sf"/>
</dbReference>
<dbReference type="InterPro" id="IPR006361">
    <property type="entry name" value="Uroporphyrinogen_deCO2ase_HemE"/>
</dbReference>
<dbReference type="InterPro" id="IPR000257">
    <property type="entry name" value="Uroporphyrinogen_deCOase"/>
</dbReference>
<dbReference type="NCBIfam" id="TIGR01464">
    <property type="entry name" value="hemE"/>
    <property type="match status" value="1"/>
</dbReference>
<dbReference type="PANTHER" id="PTHR21091">
    <property type="entry name" value="METHYLTETRAHYDROFOLATE:HOMOCYSTEINE METHYLTRANSFERASE RELATED"/>
    <property type="match status" value="1"/>
</dbReference>
<dbReference type="PANTHER" id="PTHR21091:SF169">
    <property type="entry name" value="UROPORPHYRINOGEN DECARBOXYLASE"/>
    <property type="match status" value="1"/>
</dbReference>
<dbReference type="Pfam" id="PF01208">
    <property type="entry name" value="URO-D"/>
    <property type="match status" value="1"/>
</dbReference>
<dbReference type="SUPFAM" id="SSF51726">
    <property type="entry name" value="UROD/MetE-like"/>
    <property type="match status" value="1"/>
</dbReference>
<dbReference type="PROSITE" id="PS00906">
    <property type="entry name" value="UROD_1"/>
    <property type="match status" value="1"/>
</dbReference>
<dbReference type="PROSITE" id="PS00907">
    <property type="entry name" value="UROD_2"/>
    <property type="match status" value="1"/>
</dbReference>
<feature type="chain" id="PRO_1000023987" description="Uroporphyrinogen decarboxylase">
    <location>
        <begin position="1"/>
        <end position="344"/>
    </location>
</feature>
<feature type="binding site" evidence="1">
    <location>
        <begin position="26"/>
        <end position="30"/>
    </location>
    <ligand>
        <name>substrate</name>
    </ligand>
</feature>
<feature type="binding site" evidence="1">
    <location>
        <position position="45"/>
    </location>
    <ligand>
        <name>substrate</name>
    </ligand>
</feature>
<feature type="binding site" evidence="1">
    <location>
        <position position="75"/>
    </location>
    <ligand>
        <name>substrate</name>
    </ligand>
</feature>
<feature type="binding site" evidence="1">
    <location>
        <position position="151"/>
    </location>
    <ligand>
        <name>substrate</name>
    </ligand>
</feature>
<feature type="binding site" evidence="1">
    <location>
        <position position="206"/>
    </location>
    <ligand>
        <name>substrate</name>
    </ligand>
</feature>
<feature type="binding site" evidence="1">
    <location>
        <position position="320"/>
    </location>
    <ligand>
        <name>substrate</name>
    </ligand>
</feature>
<feature type="site" description="Transition state stabilizer" evidence="1">
    <location>
        <position position="75"/>
    </location>
</feature>
<accession>Q49YM7</accession>
<sequence>MHNKNNTILNMIKGESVSHTPVWFMRQAGRSQPEYRRLKEKYSLFEITHQAELCAYVTHLPVDNYNTDAAVLYKDIMTPLQPIGVDVEIKSGIGPVIHNPIKTIQDVEKLGHIDPKRDVPYVLDTIKLLTEEKLNVPLIGFTGAPFTLASYMIEGGPSKNYNFTKAMMYSDEATWFALMDHLVEMSITYTSAQIEAGAQIIQVFDSWVGALNVQDYRYYIKPAMNKLISGIKEKYNVPVILFGVGASHLADEWNTLPIDVLGLDWRLSIKEASSMNIDKTLQGNLDPSLLLAPWDVIEERLKAILDQGIAHGKHIFNLGHGVFPEVKPETLKRVTTFVHDYTQR</sequence>
<proteinExistence type="inferred from homology"/>
<comment type="function">
    <text evidence="1">Catalyzes the decarboxylation of four acetate groups of uroporphyrinogen-III to yield coproporphyrinogen-III.</text>
</comment>
<comment type="catalytic activity">
    <reaction evidence="1">
        <text>uroporphyrinogen III + 4 H(+) = coproporphyrinogen III + 4 CO2</text>
        <dbReference type="Rhea" id="RHEA:19865"/>
        <dbReference type="ChEBI" id="CHEBI:15378"/>
        <dbReference type="ChEBI" id="CHEBI:16526"/>
        <dbReference type="ChEBI" id="CHEBI:57308"/>
        <dbReference type="ChEBI" id="CHEBI:57309"/>
        <dbReference type="EC" id="4.1.1.37"/>
    </reaction>
</comment>
<comment type="pathway">
    <text evidence="1">Porphyrin-containing compound metabolism; protoporphyrin-IX biosynthesis; coproporphyrinogen-III from 5-aminolevulinate: step 4/4.</text>
</comment>
<comment type="subunit">
    <text evidence="1">Homodimer.</text>
</comment>
<comment type="subcellular location">
    <subcellularLocation>
        <location evidence="1">Cytoplasm</location>
    </subcellularLocation>
</comment>
<comment type="similarity">
    <text evidence="1">Belongs to the uroporphyrinogen decarboxylase family.</text>
</comment>
<organism>
    <name type="scientific">Staphylococcus saprophyticus subsp. saprophyticus (strain ATCC 15305 / DSM 20229 / NCIMB 8711 / NCTC 7292 / S-41)</name>
    <dbReference type="NCBI Taxonomy" id="342451"/>
    <lineage>
        <taxon>Bacteria</taxon>
        <taxon>Bacillati</taxon>
        <taxon>Bacillota</taxon>
        <taxon>Bacilli</taxon>
        <taxon>Bacillales</taxon>
        <taxon>Staphylococcaceae</taxon>
        <taxon>Staphylococcus</taxon>
    </lineage>
</organism>
<name>DCUP_STAS1</name>
<protein>
    <recommendedName>
        <fullName evidence="1">Uroporphyrinogen decarboxylase</fullName>
        <shortName evidence="1">UPD</shortName>
        <shortName evidence="1">URO-D</shortName>
        <ecNumber evidence="1">4.1.1.37</ecNumber>
    </recommendedName>
</protein>
<evidence type="ECO:0000255" key="1">
    <source>
        <dbReference type="HAMAP-Rule" id="MF_00218"/>
    </source>
</evidence>